<feature type="chain" id="PRO_0000065505" description="Uncharacterized protein ZK177.2">
    <location>
        <begin position="1"/>
        <end position="296"/>
    </location>
</feature>
<feature type="transmembrane region" description="Helical" evidence="1">
    <location>
        <begin position="1"/>
        <end position="21"/>
    </location>
</feature>
<proteinExistence type="predicted"/>
<name>YS42_CAEEL</name>
<protein>
    <recommendedName>
        <fullName>Uncharacterized protein ZK177.2</fullName>
    </recommendedName>
</protein>
<dbReference type="EMBL" id="FO080583">
    <property type="protein sequence ID" value="CCD64856.1"/>
    <property type="molecule type" value="Genomic_DNA"/>
</dbReference>
<dbReference type="PIR" id="T27768">
    <property type="entry name" value="T27768"/>
</dbReference>
<dbReference type="RefSeq" id="NP_495058.1">
    <property type="nucleotide sequence ID" value="NM_062657.3"/>
</dbReference>
<dbReference type="FunCoup" id="Q09371">
    <property type="interactions" value="417"/>
</dbReference>
<dbReference type="PaxDb" id="6239-ZK177.2"/>
<dbReference type="EnsemblMetazoa" id="ZK177.2.1">
    <property type="protein sequence ID" value="ZK177.2.1"/>
    <property type="gene ID" value="WBGene00022670"/>
</dbReference>
<dbReference type="GeneID" id="191236"/>
<dbReference type="KEGG" id="cel:CELE_ZK177.2"/>
<dbReference type="UCSC" id="ZK177.2">
    <property type="organism name" value="c. elegans"/>
</dbReference>
<dbReference type="AGR" id="WB:WBGene00022670"/>
<dbReference type="CTD" id="191236"/>
<dbReference type="WormBase" id="ZK177.2">
    <property type="protein sequence ID" value="CE02091"/>
    <property type="gene ID" value="WBGene00022670"/>
</dbReference>
<dbReference type="eggNOG" id="KOG2464">
    <property type="taxonomic scope" value="Eukaryota"/>
</dbReference>
<dbReference type="GeneTree" id="ENSGT00970000196812"/>
<dbReference type="HOGENOM" id="CLU_940841_0_0_1"/>
<dbReference type="InParanoid" id="Q09371"/>
<dbReference type="PhylomeDB" id="Q09371"/>
<dbReference type="PRO" id="PR:Q09371"/>
<dbReference type="Proteomes" id="UP000001940">
    <property type="component" value="Chromosome II"/>
</dbReference>
<dbReference type="Bgee" id="WBGene00022670">
    <property type="expression patterns" value="Expressed in adult organism and 1 other cell type or tissue"/>
</dbReference>
<dbReference type="GO" id="GO:0005737">
    <property type="term" value="C:cytoplasm"/>
    <property type="evidence" value="ECO:0000318"/>
    <property type="project" value="GO_Central"/>
</dbReference>
<dbReference type="GO" id="GO:0016020">
    <property type="term" value="C:membrane"/>
    <property type="evidence" value="ECO:0007669"/>
    <property type="project" value="UniProtKB-SubCell"/>
</dbReference>
<dbReference type="GO" id="GO:0005634">
    <property type="term" value="C:nucleus"/>
    <property type="evidence" value="ECO:0000318"/>
    <property type="project" value="GO_Central"/>
</dbReference>
<dbReference type="GO" id="GO:0005524">
    <property type="term" value="F:ATP binding"/>
    <property type="evidence" value="ECO:0007669"/>
    <property type="project" value="InterPro"/>
</dbReference>
<dbReference type="GO" id="GO:0072354">
    <property type="term" value="F:histone H3T3 kinase activity"/>
    <property type="evidence" value="ECO:0000318"/>
    <property type="project" value="GO_Central"/>
</dbReference>
<dbReference type="GO" id="GO:0035556">
    <property type="term" value="P:intracellular signal transduction"/>
    <property type="evidence" value="ECO:0000318"/>
    <property type="project" value="GO_Central"/>
</dbReference>
<dbReference type="GO" id="GO:0000278">
    <property type="term" value="P:mitotic cell cycle"/>
    <property type="evidence" value="ECO:0000318"/>
    <property type="project" value="GO_Central"/>
</dbReference>
<dbReference type="Gene3D" id="1.10.510.10">
    <property type="entry name" value="Transferase(Phosphotransferase) domain 1"/>
    <property type="match status" value="1"/>
</dbReference>
<dbReference type="InterPro" id="IPR011009">
    <property type="entry name" value="Kinase-like_dom_sf"/>
</dbReference>
<dbReference type="InterPro" id="IPR000719">
    <property type="entry name" value="Prot_kinase_dom"/>
</dbReference>
<dbReference type="InterPro" id="IPR017441">
    <property type="entry name" value="Protein_kinase_ATP_BS"/>
</dbReference>
<dbReference type="PANTHER" id="PTHR24419">
    <property type="entry name" value="INTERLEUKIN-1 RECEPTOR-ASSOCIATED KINASE"/>
    <property type="match status" value="1"/>
</dbReference>
<dbReference type="PANTHER" id="PTHR24419:SF18">
    <property type="entry name" value="SERINE_THREONINE-PROTEIN KINASE HASPIN"/>
    <property type="match status" value="1"/>
</dbReference>
<dbReference type="Pfam" id="PF12330">
    <property type="entry name" value="Haspin_kinase"/>
    <property type="match status" value="1"/>
</dbReference>
<dbReference type="SUPFAM" id="SSF56112">
    <property type="entry name" value="Protein kinase-like (PK-like)"/>
    <property type="match status" value="1"/>
</dbReference>
<dbReference type="PROSITE" id="PS50011">
    <property type="entry name" value="PROTEIN_KINASE_DOM"/>
    <property type="match status" value="1"/>
</dbReference>
<comment type="subcellular location">
    <subcellularLocation>
        <location evidence="2">Membrane</location>
        <topology evidence="2">Single-pass membrane protein</topology>
    </subcellularLocation>
</comment>
<evidence type="ECO:0000255" key="1"/>
<evidence type="ECO:0000305" key="2"/>
<accession>Q09371</accession>
<gene>
    <name type="ORF">ZK177.2</name>
</gene>
<sequence length="296" mass="33516">MIFAVVDILEISIQLLCILLFGTTVINCVSKGRHKDVNAIVRETESKKIVPWSDAKVQIKKFLGDGASGTAYLVVWEDKEVVMKVTGIHPQSISVLHDELLITQKIGKLSKSCHNFLPYHGSIVISDLPAKMMRNSECVNHLAIFMGYGGTVLADWRTSDYRRCITIMAQLVLAMRIANDKMKFVHGDIYMMNILIAPTTKRWIEYNIDGKTITIQTFGIIPQLIDFSKSWCGADPERHDISRLHTVAKRVGHSLNGSKRDKKKVRQAVKMVGAAKNWKNLCLYRQLFKQVIVHDH</sequence>
<reference key="1">
    <citation type="journal article" date="1998" name="Science">
        <title>Genome sequence of the nematode C. elegans: a platform for investigating biology.</title>
        <authorList>
            <consortium name="The C. elegans sequencing consortium"/>
        </authorList>
    </citation>
    <scope>NUCLEOTIDE SEQUENCE [LARGE SCALE GENOMIC DNA]</scope>
    <source>
        <strain>Bristol N2</strain>
    </source>
</reference>
<keyword id="KW-0472">Membrane</keyword>
<keyword id="KW-1185">Reference proteome</keyword>
<keyword id="KW-0812">Transmembrane</keyword>
<keyword id="KW-1133">Transmembrane helix</keyword>
<organism>
    <name type="scientific">Caenorhabditis elegans</name>
    <dbReference type="NCBI Taxonomy" id="6239"/>
    <lineage>
        <taxon>Eukaryota</taxon>
        <taxon>Metazoa</taxon>
        <taxon>Ecdysozoa</taxon>
        <taxon>Nematoda</taxon>
        <taxon>Chromadorea</taxon>
        <taxon>Rhabditida</taxon>
        <taxon>Rhabditina</taxon>
        <taxon>Rhabditomorpha</taxon>
        <taxon>Rhabditoidea</taxon>
        <taxon>Rhabditidae</taxon>
        <taxon>Peloderinae</taxon>
        <taxon>Caenorhabditis</taxon>
    </lineage>
</organism>